<sequence length="930" mass="105122">MKLKDTLNLGKTAFPMRAGLPTKEPVWQKEWEDAKLYQRRQELNEGKPHFVLHDGPPYANGNIHVGHAMNHISKDIIIRSKSMSGFNAPYIPGWDTHGLPIEQVLAKQGVKRKEMDLVEYLKLCREYALSQVYKQRDDFKRLGMSGDWENLYVTLTPDYEAAQIRVFGEMANKGYIYRGAKPVYWSWSSESALAEAEIEYHDLVSTSLYYANKVKDGKGILDTDTYIVVWTTTPFTITASRGLTVGADIDYVLVQPASETRKFVVAAELLTSLSEKFGWADVQVLATYRGQELNHIVTEHPWDTAVDELVILGDHVTTDSGTGIVHTAPGFGEDDYNVGIANGLEVAVTVDERGIMMANAGPEFEGQFYDKVVPTVIEKLGNLLLAQEEISHSYPFDWRTKKPIIWRAVPQWFASVSKFRQEILDAIDKVKFHTEWGKVRLYNMIRDRGDWVISRQRAWGVPLPIFYAEDGTAIMTAETIEHVAQLFEVHGSSIWWERDAKDLLPEGFTHPGSPNGEFKKETDIMDVWFDSGSSWNGVLVNRPNLTYPADLYLEGSDQYRGWFNSSLITSVANHGVAPYKQILSQGFTLDGKGEKMSKSLGNTIAPSDVEKQFGAEILRLWVTSVDSSNDVRISMDILSQVSETYRKIRNTLRFLIANTSDFNPAQDVVAYDELRSVDKYMTIRFNQLVKTIRDAYADFEFLTIYKALVNFINVDLSAFYLDFAKDVVYIEGAKSLERRQMQTVFYDILVKITKLLTPILPHTAEEIWSYLEFEAEDFVQLSELPEAQTFANQEEVLDTWAAFMDFRGQAQKALEEARNAKVIGKSLEAHLTVYPNEVVKTLLEAVNSNVAQLLIVSDLTIAEGPAPEAALSFEDVAFTVERAAGQVCDRCRRIDPTTAERSYQAVICDHCASIVEENFAEAVAEGFEEK</sequence>
<dbReference type="EC" id="6.1.1.5" evidence="1"/>
<dbReference type="EMBL" id="FM211187">
    <property type="protein sequence ID" value="CAR69433.1"/>
    <property type="molecule type" value="Genomic_DNA"/>
</dbReference>
<dbReference type="RefSeq" id="WP_000768038.1">
    <property type="nucleotide sequence ID" value="NC_011900.1"/>
</dbReference>
<dbReference type="SMR" id="B8ZM55"/>
<dbReference type="KEGG" id="sne:SPN23F16600"/>
<dbReference type="HOGENOM" id="CLU_001493_7_1_9"/>
<dbReference type="GO" id="GO:0005829">
    <property type="term" value="C:cytosol"/>
    <property type="evidence" value="ECO:0007669"/>
    <property type="project" value="TreeGrafter"/>
</dbReference>
<dbReference type="GO" id="GO:0002161">
    <property type="term" value="F:aminoacyl-tRNA deacylase activity"/>
    <property type="evidence" value="ECO:0007669"/>
    <property type="project" value="InterPro"/>
</dbReference>
<dbReference type="GO" id="GO:0005524">
    <property type="term" value="F:ATP binding"/>
    <property type="evidence" value="ECO:0007669"/>
    <property type="project" value="UniProtKB-UniRule"/>
</dbReference>
<dbReference type="GO" id="GO:0004822">
    <property type="term" value="F:isoleucine-tRNA ligase activity"/>
    <property type="evidence" value="ECO:0007669"/>
    <property type="project" value="UniProtKB-UniRule"/>
</dbReference>
<dbReference type="GO" id="GO:0000049">
    <property type="term" value="F:tRNA binding"/>
    <property type="evidence" value="ECO:0007669"/>
    <property type="project" value="InterPro"/>
</dbReference>
<dbReference type="GO" id="GO:0008270">
    <property type="term" value="F:zinc ion binding"/>
    <property type="evidence" value="ECO:0007669"/>
    <property type="project" value="UniProtKB-UniRule"/>
</dbReference>
<dbReference type="GO" id="GO:0006428">
    <property type="term" value="P:isoleucyl-tRNA aminoacylation"/>
    <property type="evidence" value="ECO:0007669"/>
    <property type="project" value="UniProtKB-UniRule"/>
</dbReference>
<dbReference type="CDD" id="cd07960">
    <property type="entry name" value="Anticodon_Ia_Ile_BEm"/>
    <property type="match status" value="1"/>
</dbReference>
<dbReference type="CDD" id="cd00818">
    <property type="entry name" value="IleRS_core"/>
    <property type="match status" value="1"/>
</dbReference>
<dbReference type="FunFam" id="1.10.10.830:FF:000001">
    <property type="entry name" value="Isoleucine--tRNA ligase"/>
    <property type="match status" value="1"/>
</dbReference>
<dbReference type="FunFam" id="1.10.730.20:FF:000001">
    <property type="entry name" value="Isoleucine--tRNA ligase"/>
    <property type="match status" value="1"/>
</dbReference>
<dbReference type="FunFam" id="3.40.50.620:FF:000092">
    <property type="entry name" value="Isoleucine--tRNA ligase"/>
    <property type="match status" value="1"/>
</dbReference>
<dbReference type="FunFam" id="3.90.740.10:FF:000006">
    <property type="entry name" value="Isoleucine--tRNA ligase"/>
    <property type="match status" value="1"/>
</dbReference>
<dbReference type="Gene3D" id="1.10.730.20">
    <property type="match status" value="1"/>
</dbReference>
<dbReference type="Gene3D" id="3.40.50.620">
    <property type="entry name" value="HUPs"/>
    <property type="match status" value="2"/>
</dbReference>
<dbReference type="Gene3D" id="1.10.10.830">
    <property type="entry name" value="Ile-tRNA synthetase CP2 domain-like"/>
    <property type="match status" value="1"/>
</dbReference>
<dbReference type="Gene3D" id="3.90.740.10">
    <property type="entry name" value="Valyl/Leucyl/Isoleucyl-tRNA synthetase, editing domain"/>
    <property type="match status" value="1"/>
</dbReference>
<dbReference type="HAMAP" id="MF_02002">
    <property type="entry name" value="Ile_tRNA_synth_type1"/>
    <property type="match status" value="1"/>
</dbReference>
<dbReference type="InterPro" id="IPR001412">
    <property type="entry name" value="aa-tRNA-synth_I_CS"/>
</dbReference>
<dbReference type="InterPro" id="IPR002300">
    <property type="entry name" value="aa-tRNA-synth_Ia"/>
</dbReference>
<dbReference type="InterPro" id="IPR033708">
    <property type="entry name" value="Anticodon_Ile_BEm"/>
</dbReference>
<dbReference type="InterPro" id="IPR002301">
    <property type="entry name" value="Ile-tRNA-ligase"/>
</dbReference>
<dbReference type="InterPro" id="IPR023585">
    <property type="entry name" value="Ile-tRNA-ligase_type1"/>
</dbReference>
<dbReference type="InterPro" id="IPR050081">
    <property type="entry name" value="Ile-tRNA_ligase"/>
</dbReference>
<dbReference type="InterPro" id="IPR013155">
    <property type="entry name" value="M/V/L/I-tRNA-synth_anticd-bd"/>
</dbReference>
<dbReference type="InterPro" id="IPR014729">
    <property type="entry name" value="Rossmann-like_a/b/a_fold"/>
</dbReference>
<dbReference type="InterPro" id="IPR009080">
    <property type="entry name" value="tRNAsynth_Ia_anticodon-bd"/>
</dbReference>
<dbReference type="InterPro" id="IPR009008">
    <property type="entry name" value="Val/Leu/Ile-tRNA-synth_edit"/>
</dbReference>
<dbReference type="InterPro" id="IPR010663">
    <property type="entry name" value="Znf_FPG/IleRS"/>
</dbReference>
<dbReference type="NCBIfam" id="TIGR00392">
    <property type="entry name" value="ileS"/>
    <property type="match status" value="1"/>
</dbReference>
<dbReference type="PANTHER" id="PTHR42765:SF1">
    <property type="entry name" value="ISOLEUCINE--TRNA LIGASE, MITOCHONDRIAL"/>
    <property type="match status" value="1"/>
</dbReference>
<dbReference type="PANTHER" id="PTHR42765">
    <property type="entry name" value="SOLEUCYL-TRNA SYNTHETASE"/>
    <property type="match status" value="1"/>
</dbReference>
<dbReference type="Pfam" id="PF08264">
    <property type="entry name" value="Anticodon_1"/>
    <property type="match status" value="1"/>
</dbReference>
<dbReference type="Pfam" id="PF00133">
    <property type="entry name" value="tRNA-synt_1"/>
    <property type="match status" value="1"/>
</dbReference>
<dbReference type="Pfam" id="PF06827">
    <property type="entry name" value="zf-FPG_IleRS"/>
    <property type="match status" value="1"/>
</dbReference>
<dbReference type="PRINTS" id="PR00984">
    <property type="entry name" value="TRNASYNTHILE"/>
</dbReference>
<dbReference type="SUPFAM" id="SSF47323">
    <property type="entry name" value="Anticodon-binding domain of a subclass of class I aminoacyl-tRNA synthetases"/>
    <property type="match status" value="1"/>
</dbReference>
<dbReference type="SUPFAM" id="SSF52374">
    <property type="entry name" value="Nucleotidylyl transferase"/>
    <property type="match status" value="1"/>
</dbReference>
<dbReference type="SUPFAM" id="SSF50677">
    <property type="entry name" value="ValRS/IleRS/LeuRS editing domain"/>
    <property type="match status" value="1"/>
</dbReference>
<dbReference type="PROSITE" id="PS00178">
    <property type="entry name" value="AA_TRNA_LIGASE_I"/>
    <property type="match status" value="1"/>
</dbReference>
<organism>
    <name type="scientific">Streptococcus pneumoniae (strain ATCC 700669 / Spain 23F-1)</name>
    <dbReference type="NCBI Taxonomy" id="561276"/>
    <lineage>
        <taxon>Bacteria</taxon>
        <taxon>Bacillati</taxon>
        <taxon>Bacillota</taxon>
        <taxon>Bacilli</taxon>
        <taxon>Lactobacillales</taxon>
        <taxon>Streptococcaceae</taxon>
        <taxon>Streptococcus</taxon>
    </lineage>
</organism>
<reference key="1">
    <citation type="journal article" date="2009" name="J. Bacteriol.">
        <title>Role of conjugative elements in the evolution of the multidrug-resistant pandemic clone Streptococcus pneumoniae Spain23F ST81.</title>
        <authorList>
            <person name="Croucher N.J."/>
            <person name="Walker D."/>
            <person name="Romero P."/>
            <person name="Lennard N."/>
            <person name="Paterson G.K."/>
            <person name="Bason N.C."/>
            <person name="Mitchell A.M."/>
            <person name="Quail M.A."/>
            <person name="Andrew P.W."/>
            <person name="Parkhill J."/>
            <person name="Bentley S.D."/>
            <person name="Mitchell T.J."/>
        </authorList>
    </citation>
    <scope>NUCLEOTIDE SEQUENCE [LARGE SCALE GENOMIC DNA]</scope>
    <source>
        <strain>ATCC 700669 / Spain 23F-1</strain>
    </source>
</reference>
<comment type="function">
    <text evidence="1">Catalyzes the attachment of isoleucine to tRNA(Ile). As IleRS can inadvertently accommodate and process structurally similar amino acids such as valine, to avoid such errors it has two additional distinct tRNA(Ile)-dependent editing activities. One activity is designated as 'pretransfer' editing and involves the hydrolysis of activated Val-AMP. The other activity is designated 'posttransfer' editing and involves deacylation of mischarged Val-tRNA(Ile).</text>
</comment>
<comment type="catalytic activity">
    <reaction evidence="1">
        <text>tRNA(Ile) + L-isoleucine + ATP = L-isoleucyl-tRNA(Ile) + AMP + diphosphate</text>
        <dbReference type="Rhea" id="RHEA:11060"/>
        <dbReference type="Rhea" id="RHEA-COMP:9666"/>
        <dbReference type="Rhea" id="RHEA-COMP:9695"/>
        <dbReference type="ChEBI" id="CHEBI:30616"/>
        <dbReference type="ChEBI" id="CHEBI:33019"/>
        <dbReference type="ChEBI" id="CHEBI:58045"/>
        <dbReference type="ChEBI" id="CHEBI:78442"/>
        <dbReference type="ChEBI" id="CHEBI:78528"/>
        <dbReference type="ChEBI" id="CHEBI:456215"/>
        <dbReference type="EC" id="6.1.1.5"/>
    </reaction>
</comment>
<comment type="cofactor">
    <cofactor evidence="1">
        <name>Zn(2+)</name>
        <dbReference type="ChEBI" id="CHEBI:29105"/>
    </cofactor>
    <text evidence="1">Binds 1 zinc ion per subunit.</text>
</comment>
<comment type="subunit">
    <text evidence="1">Monomer.</text>
</comment>
<comment type="subcellular location">
    <subcellularLocation>
        <location evidence="1">Cytoplasm</location>
    </subcellularLocation>
</comment>
<comment type="domain">
    <text evidence="1">IleRS has two distinct active sites: one for aminoacylation and one for editing. The misactivated valine is translocated from the active site to the editing site, which sterically excludes the correctly activated isoleucine. The single editing site contains two valyl binding pockets, one specific for each substrate (Val-AMP or Val-tRNA(Ile)).</text>
</comment>
<comment type="similarity">
    <text evidence="1">Belongs to the class-I aminoacyl-tRNA synthetase family. IleS type 1 subfamily.</text>
</comment>
<gene>
    <name evidence="1" type="primary">ileS</name>
    <name type="ordered locus">SPN23F16600</name>
</gene>
<keyword id="KW-0030">Aminoacyl-tRNA synthetase</keyword>
<keyword id="KW-0067">ATP-binding</keyword>
<keyword id="KW-0963">Cytoplasm</keyword>
<keyword id="KW-0436">Ligase</keyword>
<keyword id="KW-0479">Metal-binding</keyword>
<keyword id="KW-0547">Nucleotide-binding</keyword>
<keyword id="KW-0648">Protein biosynthesis</keyword>
<keyword id="KW-0862">Zinc</keyword>
<protein>
    <recommendedName>
        <fullName evidence="1">Isoleucine--tRNA ligase</fullName>
        <ecNumber evidence="1">6.1.1.5</ecNumber>
    </recommendedName>
    <alternativeName>
        <fullName evidence="1">Isoleucyl-tRNA synthetase</fullName>
        <shortName evidence="1">IleRS</shortName>
    </alternativeName>
</protein>
<feature type="chain" id="PRO_1000189204" description="Isoleucine--tRNA ligase">
    <location>
        <begin position="1"/>
        <end position="930"/>
    </location>
</feature>
<feature type="short sequence motif" description="'HIGH' region">
    <location>
        <begin position="57"/>
        <end position="67"/>
    </location>
</feature>
<feature type="short sequence motif" description="'KMSKS' region">
    <location>
        <begin position="595"/>
        <end position="599"/>
    </location>
</feature>
<feature type="binding site" evidence="1">
    <location>
        <position position="554"/>
    </location>
    <ligand>
        <name>L-isoleucyl-5'-AMP</name>
        <dbReference type="ChEBI" id="CHEBI:178002"/>
    </ligand>
</feature>
<feature type="binding site" evidence="1">
    <location>
        <position position="598"/>
    </location>
    <ligand>
        <name>ATP</name>
        <dbReference type="ChEBI" id="CHEBI:30616"/>
    </ligand>
</feature>
<feature type="binding site" evidence="1">
    <location>
        <position position="888"/>
    </location>
    <ligand>
        <name>Zn(2+)</name>
        <dbReference type="ChEBI" id="CHEBI:29105"/>
    </ligand>
</feature>
<feature type="binding site" evidence="1">
    <location>
        <position position="891"/>
    </location>
    <ligand>
        <name>Zn(2+)</name>
        <dbReference type="ChEBI" id="CHEBI:29105"/>
    </ligand>
</feature>
<feature type="binding site" evidence="1">
    <location>
        <position position="908"/>
    </location>
    <ligand>
        <name>Zn(2+)</name>
        <dbReference type="ChEBI" id="CHEBI:29105"/>
    </ligand>
</feature>
<feature type="binding site" evidence="1">
    <location>
        <position position="911"/>
    </location>
    <ligand>
        <name>Zn(2+)</name>
        <dbReference type="ChEBI" id="CHEBI:29105"/>
    </ligand>
</feature>
<proteinExistence type="inferred from homology"/>
<accession>B8ZM55</accession>
<evidence type="ECO:0000255" key="1">
    <source>
        <dbReference type="HAMAP-Rule" id="MF_02002"/>
    </source>
</evidence>
<name>SYI_STRPJ</name>